<proteinExistence type="inferred from homology"/>
<reference key="1">
    <citation type="submission" date="2005-08" db="EMBL/GenBank/DDBJ databases">
        <title>Complete sequence of chromosome 1 of Nitrosospira multiformis ATCC 25196.</title>
        <authorList>
            <person name="Copeland A."/>
            <person name="Lucas S."/>
            <person name="Lapidus A."/>
            <person name="Barry K."/>
            <person name="Detter J.C."/>
            <person name="Glavina T."/>
            <person name="Hammon N."/>
            <person name="Israni S."/>
            <person name="Pitluck S."/>
            <person name="Chain P."/>
            <person name="Malfatti S."/>
            <person name="Shin M."/>
            <person name="Vergez L."/>
            <person name="Schmutz J."/>
            <person name="Larimer F."/>
            <person name="Land M."/>
            <person name="Hauser L."/>
            <person name="Kyrpides N."/>
            <person name="Lykidis A."/>
            <person name="Richardson P."/>
        </authorList>
    </citation>
    <scope>NUCLEOTIDE SEQUENCE [LARGE SCALE GENOMIC DNA]</scope>
    <source>
        <strain>ATCC 25196 / NCIMB 11849 / C 71</strain>
    </source>
</reference>
<name>CH10_NITMU</name>
<keyword id="KW-0143">Chaperone</keyword>
<keyword id="KW-0963">Cytoplasm</keyword>
<keyword id="KW-1185">Reference proteome</keyword>
<comment type="function">
    <text evidence="1">Together with the chaperonin GroEL, plays an essential role in assisting protein folding. The GroEL-GroES system forms a nano-cage that allows encapsulation of the non-native substrate proteins and provides a physical environment optimized to promote and accelerate protein folding. GroES binds to the apical surface of the GroEL ring, thereby capping the opening of the GroEL channel.</text>
</comment>
<comment type="subunit">
    <text evidence="1">Heptamer of 7 subunits arranged in a ring. Interacts with the chaperonin GroEL.</text>
</comment>
<comment type="subcellular location">
    <subcellularLocation>
        <location evidence="1">Cytoplasm</location>
    </subcellularLocation>
</comment>
<comment type="similarity">
    <text evidence="1">Belongs to the GroES chaperonin family.</text>
</comment>
<accession>Q2Y6I5</accession>
<sequence length="96" mass="10455">MQIRPLHDRVIVKRLEEERKTASGIVIPDSAAEKPDQGEIIAVGKGKVGDDGNVRPLEVKVGDKVLFGKYSGQTVKISGEELLVMREEDIMGVVEG</sequence>
<evidence type="ECO:0000255" key="1">
    <source>
        <dbReference type="HAMAP-Rule" id="MF_00580"/>
    </source>
</evidence>
<dbReference type="EMBL" id="CP000103">
    <property type="protein sequence ID" value="ABB75636.1"/>
    <property type="molecule type" value="Genomic_DNA"/>
</dbReference>
<dbReference type="RefSeq" id="WP_011381639.1">
    <property type="nucleotide sequence ID" value="NC_007614.1"/>
</dbReference>
<dbReference type="SMR" id="Q2Y6I5"/>
<dbReference type="STRING" id="323848.Nmul_A2345"/>
<dbReference type="KEGG" id="nmu:Nmul_A2345"/>
<dbReference type="eggNOG" id="COG0234">
    <property type="taxonomic scope" value="Bacteria"/>
</dbReference>
<dbReference type="HOGENOM" id="CLU_132825_2_0_4"/>
<dbReference type="OrthoDB" id="9806791at2"/>
<dbReference type="Proteomes" id="UP000002718">
    <property type="component" value="Chromosome"/>
</dbReference>
<dbReference type="GO" id="GO:0005737">
    <property type="term" value="C:cytoplasm"/>
    <property type="evidence" value="ECO:0007669"/>
    <property type="project" value="UniProtKB-SubCell"/>
</dbReference>
<dbReference type="GO" id="GO:0005524">
    <property type="term" value="F:ATP binding"/>
    <property type="evidence" value="ECO:0007669"/>
    <property type="project" value="InterPro"/>
</dbReference>
<dbReference type="GO" id="GO:0046872">
    <property type="term" value="F:metal ion binding"/>
    <property type="evidence" value="ECO:0007669"/>
    <property type="project" value="TreeGrafter"/>
</dbReference>
<dbReference type="GO" id="GO:0044183">
    <property type="term" value="F:protein folding chaperone"/>
    <property type="evidence" value="ECO:0007669"/>
    <property type="project" value="InterPro"/>
</dbReference>
<dbReference type="GO" id="GO:0051087">
    <property type="term" value="F:protein-folding chaperone binding"/>
    <property type="evidence" value="ECO:0007669"/>
    <property type="project" value="TreeGrafter"/>
</dbReference>
<dbReference type="GO" id="GO:0051082">
    <property type="term" value="F:unfolded protein binding"/>
    <property type="evidence" value="ECO:0007669"/>
    <property type="project" value="TreeGrafter"/>
</dbReference>
<dbReference type="GO" id="GO:0051085">
    <property type="term" value="P:chaperone cofactor-dependent protein refolding"/>
    <property type="evidence" value="ECO:0007669"/>
    <property type="project" value="TreeGrafter"/>
</dbReference>
<dbReference type="CDD" id="cd00320">
    <property type="entry name" value="cpn10"/>
    <property type="match status" value="1"/>
</dbReference>
<dbReference type="FunFam" id="2.30.33.40:FF:000001">
    <property type="entry name" value="10 kDa chaperonin"/>
    <property type="match status" value="1"/>
</dbReference>
<dbReference type="Gene3D" id="2.30.33.40">
    <property type="entry name" value="GroES chaperonin"/>
    <property type="match status" value="1"/>
</dbReference>
<dbReference type="HAMAP" id="MF_00580">
    <property type="entry name" value="CH10"/>
    <property type="match status" value="1"/>
</dbReference>
<dbReference type="InterPro" id="IPR020818">
    <property type="entry name" value="Chaperonin_GroES"/>
</dbReference>
<dbReference type="InterPro" id="IPR037124">
    <property type="entry name" value="Chaperonin_GroES_sf"/>
</dbReference>
<dbReference type="InterPro" id="IPR018369">
    <property type="entry name" value="Chaprnonin_Cpn10_CS"/>
</dbReference>
<dbReference type="InterPro" id="IPR011032">
    <property type="entry name" value="GroES-like_sf"/>
</dbReference>
<dbReference type="NCBIfam" id="NF001527">
    <property type="entry name" value="PRK00364.1-2"/>
    <property type="match status" value="1"/>
</dbReference>
<dbReference type="NCBIfam" id="NF001529">
    <property type="entry name" value="PRK00364.1-5"/>
    <property type="match status" value="1"/>
</dbReference>
<dbReference type="NCBIfam" id="NF001531">
    <property type="entry name" value="PRK00364.2-2"/>
    <property type="match status" value="1"/>
</dbReference>
<dbReference type="NCBIfam" id="NF001533">
    <property type="entry name" value="PRK00364.2-4"/>
    <property type="match status" value="1"/>
</dbReference>
<dbReference type="NCBIfam" id="NF001534">
    <property type="entry name" value="PRK00364.2-5"/>
    <property type="match status" value="1"/>
</dbReference>
<dbReference type="PANTHER" id="PTHR10772">
    <property type="entry name" value="10 KDA HEAT SHOCK PROTEIN"/>
    <property type="match status" value="1"/>
</dbReference>
<dbReference type="PANTHER" id="PTHR10772:SF58">
    <property type="entry name" value="CO-CHAPERONIN GROES"/>
    <property type="match status" value="1"/>
</dbReference>
<dbReference type="Pfam" id="PF00166">
    <property type="entry name" value="Cpn10"/>
    <property type="match status" value="1"/>
</dbReference>
<dbReference type="PRINTS" id="PR00297">
    <property type="entry name" value="CHAPERONIN10"/>
</dbReference>
<dbReference type="SMART" id="SM00883">
    <property type="entry name" value="Cpn10"/>
    <property type="match status" value="1"/>
</dbReference>
<dbReference type="SUPFAM" id="SSF50129">
    <property type="entry name" value="GroES-like"/>
    <property type="match status" value="1"/>
</dbReference>
<dbReference type="PROSITE" id="PS00681">
    <property type="entry name" value="CHAPERONINS_CPN10"/>
    <property type="match status" value="1"/>
</dbReference>
<protein>
    <recommendedName>
        <fullName evidence="1">Co-chaperonin GroES</fullName>
    </recommendedName>
    <alternativeName>
        <fullName evidence="1">10 kDa chaperonin</fullName>
    </alternativeName>
    <alternativeName>
        <fullName evidence="1">Chaperonin-10</fullName>
        <shortName evidence="1">Cpn10</shortName>
    </alternativeName>
</protein>
<organism>
    <name type="scientific">Nitrosospira multiformis (strain ATCC 25196 / NCIMB 11849 / C 71)</name>
    <dbReference type="NCBI Taxonomy" id="323848"/>
    <lineage>
        <taxon>Bacteria</taxon>
        <taxon>Pseudomonadati</taxon>
        <taxon>Pseudomonadota</taxon>
        <taxon>Betaproteobacteria</taxon>
        <taxon>Nitrosomonadales</taxon>
        <taxon>Nitrosomonadaceae</taxon>
        <taxon>Nitrosospira</taxon>
    </lineage>
</organism>
<feature type="chain" id="PRO_1000025312" description="Co-chaperonin GroES">
    <location>
        <begin position="1"/>
        <end position="96"/>
    </location>
</feature>
<gene>
    <name evidence="1" type="primary">groES</name>
    <name evidence="1" type="synonym">groS</name>
    <name type="ordered locus">Nmul_A2345</name>
</gene>